<name>TRMD_DEIDV</name>
<gene>
    <name evidence="1" type="primary">trmD</name>
    <name type="ordered locus">Deide_10630</name>
</gene>
<comment type="function">
    <text evidence="1">Specifically methylates guanosine-37 in various tRNAs.</text>
</comment>
<comment type="catalytic activity">
    <reaction evidence="1">
        <text>guanosine(37) in tRNA + S-adenosyl-L-methionine = N(1)-methylguanosine(37) in tRNA + S-adenosyl-L-homocysteine + H(+)</text>
        <dbReference type="Rhea" id="RHEA:36899"/>
        <dbReference type="Rhea" id="RHEA-COMP:10145"/>
        <dbReference type="Rhea" id="RHEA-COMP:10147"/>
        <dbReference type="ChEBI" id="CHEBI:15378"/>
        <dbReference type="ChEBI" id="CHEBI:57856"/>
        <dbReference type="ChEBI" id="CHEBI:59789"/>
        <dbReference type="ChEBI" id="CHEBI:73542"/>
        <dbReference type="ChEBI" id="CHEBI:74269"/>
        <dbReference type="EC" id="2.1.1.228"/>
    </reaction>
</comment>
<comment type="subunit">
    <text evidence="1">Homodimer.</text>
</comment>
<comment type="subcellular location">
    <subcellularLocation>
        <location evidence="1">Cytoplasm</location>
    </subcellularLocation>
</comment>
<comment type="similarity">
    <text evidence="1">Belongs to the RNA methyltransferase TrmD family.</text>
</comment>
<proteinExistence type="inferred from homology"/>
<sequence>MLTFSFLTLFPELLAPFAAEAIVGKARERGLVDVNLVNMRDFAQNRHLKVDDTPYGGGAGMVIRVDVAERALHSLPPADEVILFTPAGERFTQQVAEELAGRQHLAFLCGRYEGFDARVEGLVTRELSIGDFVMMGGEAAAACVLEAVARLVPGVLGDPESHQADSFSSGLLDYPEYTRPAEWQGQPVPEVLKGGNHAAVAAWRRAQALERTWRRRPDLLPDAGLTPQDTATLLELGVSQEELDVWGAPPAPVKRHRKRRPETTESAS</sequence>
<organism>
    <name type="scientific">Deinococcus deserti (strain DSM 17065 / CIP 109153 / LMG 22923 / VCD115)</name>
    <dbReference type="NCBI Taxonomy" id="546414"/>
    <lineage>
        <taxon>Bacteria</taxon>
        <taxon>Thermotogati</taxon>
        <taxon>Deinococcota</taxon>
        <taxon>Deinococci</taxon>
        <taxon>Deinococcales</taxon>
        <taxon>Deinococcaceae</taxon>
        <taxon>Deinococcus</taxon>
    </lineage>
</organism>
<dbReference type="EC" id="2.1.1.228" evidence="1"/>
<dbReference type="EMBL" id="CP001114">
    <property type="protein sequence ID" value="ACO45955.1"/>
    <property type="molecule type" value="Genomic_DNA"/>
</dbReference>
<dbReference type="RefSeq" id="WP_012693078.1">
    <property type="nucleotide sequence ID" value="NC_012526.1"/>
</dbReference>
<dbReference type="SMR" id="C1CUT8"/>
<dbReference type="STRING" id="546414.Deide_10630"/>
<dbReference type="PaxDb" id="546414-Deide_10630"/>
<dbReference type="KEGG" id="ddr:Deide_10630"/>
<dbReference type="eggNOG" id="COG0336">
    <property type="taxonomic scope" value="Bacteria"/>
</dbReference>
<dbReference type="HOGENOM" id="CLU_047363_0_1_0"/>
<dbReference type="OrthoDB" id="9807416at2"/>
<dbReference type="Proteomes" id="UP000002208">
    <property type="component" value="Chromosome"/>
</dbReference>
<dbReference type="GO" id="GO:0005829">
    <property type="term" value="C:cytosol"/>
    <property type="evidence" value="ECO:0007669"/>
    <property type="project" value="TreeGrafter"/>
</dbReference>
<dbReference type="GO" id="GO:0052906">
    <property type="term" value="F:tRNA (guanine(37)-N1)-methyltransferase activity"/>
    <property type="evidence" value="ECO:0007669"/>
    <property type="project" value="UniProtKB-UniRule"/>
</dbReference>
<dbReference type="GO" id="GO:0002939">
    <property type="term" value="P:tRNA N1-guanine methylation"/>
    <property type="evidence" value="ECO:0007669"/>
    <property type="project" value="TreeGrafter"/>
</dbReference>
<dbReference type="CDD" id="cd18080">
    <property type="entry name" value="TrmD-like"/>
    <property type="match status" value="1"/>
</dbReference>
<dbReference type="FunFam" id="1.10.1270.20:FF:000001">
    <property type="entry name" value="tRNA (guanine-N(1)-)-methyltransferase"/>
    <property type="match status" value="1"/>
</dbReference>
<dbReference type="FunFam" id="3.40.1280.10:FF:000001">
    <property type="entry name" value="tRNA (guanine-N(1)-)-methyltransferase"/>
    <property type="match status" value="1"/>
</dbReference>
<dbReference type="Gene3D" id="3.40.1280.10">
    <property type="match status" value="1"/>
</dbReference>
<dbReference type="Gene3D" id="1.10.1270.20">
    <property type="entry name" value="tRNA(m1g37)methyltransferase, domain 2"/>
    <property type="match status" value="1"/>
</dbReference>
<dbReference type="HAMAP" id="MF_00605">
    <property type="entry name" value="TrmD"/>
    <property type="match status" value="1"/>
</dbReference>
<dbReference type="InterPro" id="IPR029028">
    <property type="entry name" value="Alpha/beta_knot_MTases"/>
</dbReference>
<dbReference type="InterPro" id="IPR023148">
    <property type="entry name" value="tRNA_m1G_MeTrfase_C_sf"/>
</dbReference>
<dbReference type="InterPro" id="IPR002649">
    <property type="entry name" value="tRNA_m1G_MeTrfase_TrmD"/>
</dbReference>
<dbReference type="InterPro" id="IPR029026">
    <property type="entry name" value="tRNA_m1G_MTases_N"/>
</dbReference>
<dbReference type="InterPro" id="IPR016009">
    <property type="entry name" value="tRNA_MeTrfase_TRMD/TRM10"/>
</dbReference>
<dbReference type="NCBIfam" id="NF000648">
    <property type="entry name" value="PRK00026.1"/>
    <property type="match status" value="1"/>
</dbReference>
<dbReference type="NCBIfam" id="TIGR00088">
    <property type="entry name" value="trmD"/>
    <property type="match status" value="1"/>
</dbReference>
<dbReference type="PANTHER" id="PTHR46417">
    <property type="entry name" value="TRNA (GUANINE-N(1)-)-METHYLTRANSFERASE"/>
    <property type="match status" value="1"/>
</dbReference>
<dbReference type="PANTHER" id="PTHR46417:SF1">
    <property type="entry name" value="TRNA (GUANINE-N(1)-)-METHYLTRANSFERASE"/>
    <property type="match status" value="1"/>
</dbReference>
<dbReference type="Pfam" id="PF01746">
    <property type="entry name" value="tRNA_m1G_MT"/>
    <property type="match status" value="1"/>
</dbReference>
<dbReference type="PIRSF" id="PIRSF000386">
    <property type="entry name" value="tRNA_mtase"/>
    <property type="match status" value="1"/>
</dbReference>
<dbReference type="SUPFAM" id="SSF75217">
    <property type="entry name" value="alpha/beta knot"/>
    <property type="match status" value="1"/>
</dbReference>
<evidence type="ECO:0000255" key="1">
    <source>
        <dbReference type="HAMAP-Rule" id="MF_00605"/>
    </source>
</evidence>
<evidence type="ECO:0000256" key="2">
    <source>
        <dbReference type="SAM" id="MobiDB-lite"/>
    </source>
</evidence>
<feature type="chain" id="PRO_1000212222" description="tRNA (guanine-N(1)-)-methyltransferase">
    <location>
        <begin position="1"/>
        <end position="268"/>
    </location>
</feature>
<feature type="region of interest" description="Disordered" evidence="2">
    <location>
        <begin position="246"/>
        <end position="268"/>
    </location>
</feature>
<feature type="binding site" evidence="1">
    <location>
        <position position="110"/>
    </location>
    <ligand>
        <name>S-adenosyl-L-methionine</name>
        <dbReference type="ChEBI" id="CHEBI:59789"/>
    </ligand>
</feature>
<feature type="binding site" evidence="1">
    <location>
        <begin position="129"/>
        <end position="134"/>
    </location>
    <ligand>
        <name>S-adenosyl-L-methionine</name>
        <dbReference type="ChEBI" id="CHEBI:59789"/>
    </ligand>
</feature>
<keyword id="KW-0963">Cytoplasm</keyword>
<keyword id="KW-0489">Methyltransferase</keyword>
<keyword id="KW-1185">Reference proteome</keyword>
<keyword id="KW-0949">S-adenosyl-L-methionine</keyword>
<keyword id="KW-0808">Transferase</keyword>
<keyword id="KW-0819">tRNA processing</keyword>
<reference key="1">
    <citation type="journal article" date="2009" name="PLoS Genet.">
        <title>Alliance of proteomics and genomics to unravel the specificities of Sahara bacterium Deinococcus deserti.</title>
        <authorList>
            <person name="de Groot A."/>
            <person name="Dulermo R."/>
            <person name="Ortet P."/>
            <person name="Blanchard L."/>
            <person name="Guerin P."/>
            <person name="Fernandez B."/>
            <person name="Vacherie B."/>
            <person name="Dossat C."/>
            <person name="Jolivet E."/>
            <person name="Siguier P."/>
            <person name="Chandler M."/>
            <person name="Barakat M."/>
            <person name="Dedieu A."/>
            <person name="Barbe V."/>
            <person name="Heulin T."/>
            <person name="Sommer S."/>
            <person name="Achouak W."/>
            <person name="Armengaud J."/>
        </authorList>
    </citation>
    <scope>NUCLEOTIDE SEQUENCE [LARGE SCALE GENOMIC DNA]</scope>
    <source>
        <strain>DSM 17065 / CIP 109153 / LMG 22923 / VCD115</strain>
    </source>
</reference>
<accession>C1CUT8</accession>
<protein>
    <recommendedName>
        <fullName evidence="1">tRNA (guanine-N(1)-)-methyltransferase</fullName>
        <ecNumber evidence="1">2.1.1.228</ecNumber>
    </recommendedName>
    <alternativeName>
        <fullName evidence="1">M1G-methyltransferase</fullName>
    </alternativeName>
    <alternativeName>
        <fullName evidence="1">tRNA [GM37] methyltransferase</fullName>
    </alternativeName>
</protein>